<gene>
    <name evidence="2" type="primary">TCEAL1</name>
</gene>
<sequence length="159" mass="18650">MEKACKEPEEQPQSPPKADEERPSVEPSPEKSSPEEQSSEEVSSEEEFFPDELLPELLPEMLESEERPPQERLSRKDLFEARPPMEQPPCGVGKHKLEEGSFKERLARSRPQFRGDIHGRNLSNEEMIKVAEEMEEMKRVRNKLMVMHWKARRNRPYPI</sequence>
<proteinExistence type="evidence at transcript level"/>
<organism>
    <name type="scientific">Bos taurus</name>
    <name type="common">Bovine</name>
    <dbReference type="NCBI Taxonomy" id="9913"/>
    <lineage>
        <taxon>Eukaryota</taxon>
        <taxon>Metazoa</taxon>
        <taxon>Chordata</taxon>
        <taxon>Craniata</taxon>
        <taxon>Vertebrata</taxon>
        <taxon>Euteleostomi</taxon>
        <taxon>Mammalia</taxon>
        <taxon>Eutheria</taxon>
        <taxon>Laurasiatheria</taxon>
        <taxon>Artiodactyla</taxon>
        <taxon>Ruminantia</taxon>
        <taxon>Pecora</taxon>
        <taxon>Bovidae</taxon>
        <taxon>Bovinae</taxon>
        <taxon>Bos</taxon>
    </lineage>
</organism>
<feature type="chain" id="PRO_0000239202" description="Transcription elongation factor A protein-like 1">
    <location>
        <begin position="1"/>
        <end position="159"/>
    </location>
</feature>
<feature type="region of interest" description="Disordered" evidence="3">
    <location>
        <begin position="1"/>
        <end position="120"/>
    </location>
</feature>
<feature type="compositionally biased region" description="Basic and acidic residues" evidence="3">
    <location>
        <begin position="17"/>
        <end position="34"/>
    </location>
</feature>
<feature type="compositionally biased region" description="Acidic residues" evidence="3">
    <location>
        <begin position="37"/>
        <end position="54"/>
    </location>
</feature>
<feature type="compositionally biased region" description="Basic and acidic residues" evidence="3">
    <location>
        <begin position="64"/>
        <end position="80"/>
    </location>
</feature>
<feature type="compositionally biased region" description="Basic and acidic residues" evidence="3">
    <location>
        <begin position="95"/>
        <end position="119"/>
    </location>
</feature>
<evidence type="ECO:0000250" key="1"/>
<evidence type="ECO:0000250" key="2">
    <source>
        <dbReference type="UniProtKB" id="Q15170"/>
    </source>
</evidence>
<evidence type="ECO:0000256" key="3">
    <source>
        <dbReference type="SAM" id="MobiDB-lite"/>
    </source>
</evidence>
<evidence type="ECO:0000305" key="4"/>
<keyword id="KW-0539">Nucleus</keyword>
<keyword id="KW-1185">Reference proteome</keyword>
<keyword id="KW-0804">Transcription</keyword>
<keyword id="KW-0805">Transcription regulation</keyword>
<comment type="function">
    <text evidence="1">May be involved in transcriptional regulation. Modulates various viral and cellular promoters in a promoter context-dependent manner. Does not bind DNA directly (By similarity).</text>
</comment>
<comment type="subcellular location">
    <subcellularLocation>
        <location evidence="1">Nucleus</location>
    </subcellularLocation>
</comment>
<comment type="similarity">
    <text evidence="4">Belongs to the TFS-II family. TFA subfamily.</text>
</comment>
<dbReference type="EMBL" id="BC112611">
    <property type="protein sequence ID" value="AAI12612.1"/>
    <property type="molecule type" value="mRNA"/>
</dbReference>
<dbReference type="RefSeq" id="NP_001039425.1">
    <property type="nucleotide sequence ID" value="NM_001045960.2"/>
</dbReference>
<dbReference type="RefSeq" id="XP_005227900.1">
    <property type="nucleotide sequence ID" value="XM_005227843.5"/>
</dbReference>
<dbReference type="FunCoup" id="Q2KIJ9">
    <property type="interactions" value="207"/>
</dbReference>
<dbReference type="STRING" id="9913.ENSBTAP00000058114"/>
<dbReference type="PaxDb" id="9913-ENSBTAP00000001397"/>
<dbReference type="Ensembl" id="ENSBTAT00000076246.2">
    <property type="protein sequence ID" value="ENSBTAP00000066726.2"/>
    <property type="gene ID" value="ENSBTAG00000049730.2"/>
</dbReference>
<dbReference type="Ensembl" id="ENSBTAT00000092283.1">
    <property type="protein sequence ID" value="ENSBTAP00000091895.1"/>
    <property type="gene ID" value="ENSBTAG00000049730.2"/>
</dbReference>
<dbReference type="GeneID" id="507187"/>
<dbReference type="KEGG" id="bta:507187"/>
<dbReference type="CTD" id="9338"/>
<dbReference type="eggNOG" id="ENOG502TCYF">
    <property type="taxonomic scope" value="Eukaryota"/>
</dbReference>
<dbReference type="GeneTree" id="ENSGT00950000183164"/>
<dbReference type="HOGENOM" id="CLU_140430_0_0_1"/>
<dbReference type="InParanoid" id="Q2KIJ9"/>
<dbReference type="OrthoDB" id="9537246at2759"/>
<dbReference type="TreeFam" id="TF336871"/>
<dbReference type="Proteomes" id="UP000009136">
    <property type="component" value="Chromosome X"/>
</dbReference>
<dbReference type="GO" id="GO:0005634">
    <property type="term" value="C:nucleus"/>
    <property type="evidence" value="ECO:0007669"/>
    <property type="project" value="UniProtKB-SubCell"/>
</dbReference>
<dbReference type="InterPro" id="IPR021156">
    <property type="entry name" value="TF_A-like/BEX"/>
</dbReference>
<dbReference type="Pfam" id="PF04538">
    <property type="entry name" value="BEX"/>
    <property type="match status" value="1"/>
</dbReference>
<reference key="1">
    <citation type="submission" date="2006-01" db="EMBL/GenBank/DDBJ databases">
        <authorList>
            <consortium name="NIH - Mammalian Gene Collection (MGC) project"/>
        </authorList>
    </citation>
    <scope>NUCLEOTIDE SEQUENCE [LARGE SCALE MRNA]</scope>
    <source>
        <strain>Hereford</strain>
        <tissue>Testis</tissue>
    </source>
</reference>
<name>TCAL1_BOVIN</name>
<accession>Q2KIJ9</accession>
<protein>
    <recommendedName>
        <fullName evidence="2">Transcription elongation factor A protein-like 1</fullName>
        <shortName>TCEA-like protein 1</shortName>
    </recommendedName>
    <alternativeName>
        <fullName>Transcription elongation factor S-II protein-like 1</fullName>
    </alternativeName>
</protein>